<proteinExistence type="inferred from homology"/>
<reference key="1">
    <citation type="submission" date="2007-04" db="EMBL/GenBank/DDBJ databases">
        <title>Complete sequence of Shewanella putrefaciens CN-32.</title>
        <authorList>
            <consortium name="US DOE Joint Genome Institute"/>
            <person name="Copeland A."/>
            <person name="Lucas S."/>
            <person name="Lapidus A."/>
            <person name="Barry K."/>
            <person name="Detter J.C."/>
            <person name="Glavina del Rio T."/>
            <person name="Hammon N."/>
            <person name="Israni S."/>
            <person name="Dalin E."/>
            <person name="Tice H."/>
            <person name="Pitluck S."/>
            <person name="Chain P."/>
            <person name="Malfatti S."/>
            <person name="Shin M."/>
            <person name="Vergez L."/>
            <person name="Schmutz J."/>
            <person name="Larimer F."/>
            <person name="Land M."/>
            <person name="Hauser L."/>
            <person name="Kyrpides N."/>
            <person name="Mikhailova N."/>
            <person name="Romine M.F."/>
            <person name="Fredrickson J."/>
            <person name="Tiedje J."/>
            <person name="Richardson P."/>
        </authorList>
    </citation>
    <scope>NUCLEOTIDE SEQUENCE [LARGE SCALE GENOMIC DNA]</scope>
    <source>
        <strain>CN-32 / ATCC BAA-453</strain>
    </source>
</reference>
<protein>
    <recommendedName>
        <fullName evidence="1">DNA ligase</fullName>
        <ecNumber evidence="1">6.5.1.2</ecNumber>
    </recommendedName>
    <alternativeName>
        <fullName evidence="1">Polydeoxyribonucleotide synthase [NAD(+)]</fullName>
    </alternativeName>
</protein>
<feature type="chain" id="PRO_0000313429" description="DNA ligase">
    <location>
        <begin position="1"/>
        <end position="685"/>
    </location>
</feature>
<feature type="domain" description="BRCT" evidence="1">
    <location>
        <begin position="605"/>
        <end position="685"/>
    </location>
</feature>
<feature type="active site" description="N6-AMP-lysine intermediate" evidence="1">
    <location>
        <position position="127"/>
    </location>
</feature>
<feature type="binding site" evidence="1">
    <location>
        <begin position="47"/>
        <end position="51"/>
    </location>
    <ligand>
        <name>NAD(+)</name>
        <dbReference type="ChEBI" id="CHEBI:57540"/>
    </ligand>
</feature>
<feature type="binding site" evidence="1">
    <location>
        <begin position="96"/>
        <end position="97"/>
    </location>
    <ligand>
        <name>NAD(+)</name>
        <dbReference type="ChEBI" id="CHEBI:57540"/>
    </ligand>
</feature>
<feature type="binding site" evidence="1">
    <location>
        <position position="125"/>
    </location>
    <ligand>
        <name>NAD(+)</name>
        <dbReference type="ChEBI" id="CHEBI:57540"/>
    </ligand>
</feature>
<feature type="binding site" evidence="1">
    <location>
        <position position="148"/>
    </location>
    <ligand>
        <name>NAD(+)</name>
        <dbReference type="ChEBI" id="CHEBI:57540"/>
    </ligand>
</feature>
<feature type="binding site" evidence="1">
    <location>
        <position position="185"/>
    </location>
    <ligand>
        <name>NAD(+)</name>
        <dbReference type="ChEBI" id="CHEBI:57540"/>
    </ligand>
</feature>
<feature type="binding site" evidence="1">
    <location>
        <position position="304"/>
    </location>
    <ligand>
        <name>NAD(+)</name>
        <dbReference type="ChEBI" id="CHEBI:57540"/>
    </ligand>
</feature>
<feature type="binding site" evidence="1">
    <location>
        <position position="328"/>
    </location>
    <ligand>
        <name>NAD(+)</name>
        <dbReference type="ChEBI" id="CHEBI:57540"/>
    </ligand>
</feature>
<feature type="binding site" evidence="1">
    <location>
        <position position="422"/>
    </location>
    <ligand>
        <name>Zn(2+)</name>
        <dbReference type="ChEBI" id="CHEBI:29105"/>
    </ligand>
</feature>
<feature type="binding site" evidence="1">
    <location>
        <position position="425"/>
    </location>
    <ligand>
        <name>Zn(2+)</name>
        <dbReference type="ChEBI" id="CHEBI:29105"/>
    </ligand>
</feature>
<feature type="binding site" evidence="1">
    <location>
        <position position="440"/>
    </location>
    <ligand>
        <name>Zn(2+)</name>
        <dbReference type="ChEBI" id="CHEBI:29105"/>
    </ligand>
</feature>
<feature type="binding site" evidence="1">
    <location>
        <position position="446"/>
    </location>
    <ligand>
        <name>Zn(2+)</name>
        <dbReference type="ChEBI" id="CHEBI:29105"/>
    </ligand>
</feature>
<sequence length="685" mass="74622">MQDIQLDKLLSADMSPENAQQVMQALSQSLNEHNIRYYVDDAPTITDSEYDRLMQCLIKLEAQFPQFIVADSPTQRVGGLALAKFDQITHLKPMLSLDNAFGEADFSAFHKRVTDKVGEVSFCCEPKLDGLAVSILYRHGVLERAATRGDGTVGEDITENVKTIKSIPLKLRGNDFPEVVEVRGEAFMPKAAFEALNERARAKDEKLFVNPRNAAAGSLRQLDSKITASRSLAFYAYALGVVEPDSYSLGKTHYEQLQQLKSWGLPVSNEIKVCDELDQVFDYYKDILTRRSDLPFEIDGVVMKVNDIAQQQRLGFVAKSPRWAIAYKFPAQEEMTLLEGVDFQVGRTGAVTPVARLKPVFVGGVTVSNATLHNADEIERLGIKIGDTVIIRRAGDVIPQIVAIVPERRPETATNIVFPHNCPVCGSLVERLEGEAVARCSGGLFCEAQRKEAIKHFASRKALDIDGMGDKVVEQLIDKELVQSPADLFKLTASMMTMLDRMGMKSATNLAAAIEAAKTTTLARFLYALGIREVGEATAANLAAHFASLDALRVATVEQLTAVEDVGVVVAQHVAHFFAQPHNLEVIDALIAAGVHWPAIEAPSADAQPLKGQTWVLTGTLNQLNRNDAKAQLQTLGAKVAGSVSKNTDCLVAGEAAGSKLAKAQELGVKVIDEEALLALFAANR</sequence>
<evidence type="ECO:0000255" key="1">
    <source>
        <dbReference type="HAMAP-Rule" id="MF_01588"/>
    </source>
</evidence>
<accession>A4Y802</accession>
<gene>
    <name evidence="1" type="primary">ligA</name>
    <name type="ordered locus">Sputcn32_2364</name>
</gene>
<comment type="function">
    <text evidence="1">DNA ligase that catalyzes the formation of phosphodiester linkages between 5'-phosphoryl and 3'-hydroxyl groups in double-stranded DNA using NAD as a coenzyme and as the energy source for the reaction. It is essential for DNA replication and repair of damaged DNA.</text>
</comment>
<comment type="catalytic activity">
    <reaction evidence="1">
        <text>NAD(+) + (deoxyribonucleotide)n-3'-hydroxyl + 5'-phospho-(deoxyribonucleotide)m = (deoxyribonucleotide)n+m + AMP + beta-nicotinamide D-nucleotide.</text>
        <dbReference type="EC" id="6.5.1.2"/>
    </reaction>
</comment>
<comment type="cofactor">
    <cofactor evidence="1">
        <name>Mg(2+)</name>
        <dbReference type="ChEBI" id="CHEBI:18420"/>
    </cofactor>
    <cofactor evidence="1">
        <name>Mn(2+)</name>
        <dbReference type="ChEBI" id="CHEBI:29035"/>
    </cofactor>
</comment>
<comment type="similarity">
    <text evidence="1">Belongs to the NAD-dependent DNA ligase family. LigA subfamily.</text>
</comment>
<dbReference type="EC" id="6.5.1.2" evidence="1"/>
<dbReference type="EMBL" id="CP000681">
    <property type="protein sequence ID" value="ABP76085.1"/>
    <property type="molecule type" value="Genomic_DNA"/>
</dbReference>
<dbReference type="SMR" id="A4Y802"/>
<dbReference type="STRING" id="319224.Sputcn32_2364"/>
<dbReference type="KEGG" id="spc:Sputcn32_2364"/>
<dbReference type="eggNOG" id="COG0272">
    <property type="taxonomic scope" value="Bacteria"/>
</dbReference>
<dbReference type="HOGENOM" id="CLU_007764_2_1_6"/>
<dbReference type="GO" id="GO:0005829">
    <property type="term" value="C:cytosol"/>
    <property type="evidence" value="ECO:0007669"/>
    <property type="project" value="TreeGrafter"/>
</dbReference>
<dbReference type="GO" id="GO:0003677">
    <property type="term" value="F:DNA binding"/>
    <property type="evidence" value="ECO:0007669"/>
    <property type="project" value="InterPro"/>
</dbReference>
<dbReference type="GO" id="GO:0003911">
    <property type="term" value="F:DNA ligase (NAD+) activity"/>
    <property type="evidence" value="ECO:0007669"/>
    <property type="project" value="UniProtKB-UniRule"/>
</dbReference>
<dbReference type="GO" id="GO:0046872">
    <property type="term" value="F:metal ion binding"/>
    <property type="evidence" value="ECO:0007669"/>
    <property type="project" value="UniProtKB-KW"/>
</dbReference>
<dbReference type="GO" id="GO:0006281">
    <property type="term" value="P:DNA repair"/>
    <property type="evidence" value="ECO:0007669"/>
    <property type="project" value="UniProtKB-KW"/>
</dbReference>
<dbReference type="GO" id="GO:0006260">
    <property type="term" value="P:DNA replication"/>
    <property type="evidence" value="ECO:0007669"/>
    <property type="project" value="UniProtKB-KW"/>
</dbReference>
<dbReference type="CDD" id="cd17748">
    <property type="entry name" value="BRCT_DNA_ligase_like"/>
    <property type="match status" value="1"/>
</dbReference>
<dbReference type="CDD" id="cd00114">
    <property type="entry name" value="LIGANc"/>
    <property type="match status" value="1"/>
</dbReference>
<dbReference type="FunFam" id="1.10.150.20:FF:000006">
    <property type="entry name" value="DNA ligase"/>
    <property type="match status" value="1"/>
</dbReference>
<dbReference type="FunFam" id="1.10.150.20:FF:000007">
    <property type="entry name" value="DNA ligase"/>
    <property type="match status" value="1"/>
</dbReference>
<dbReference type="FunFam" id="1.10.287.610:FF:000002">
    <property type="entry name" value="DNA ligase"/>
    <property type="match status" value="1"/>
</dbReference>
<dbReference type="FunFam" id="2.40.50.140:FF:000012">
    <property type="entry name" value="DNA ligase"/>
    <property type="match status" value="1"/>
</dbReference>
<dbReference type="FunFam" id="3.30.470.30:FF:000001">
    <property type="entry name" value="DNA ligase"/>
    <property type="match status" value="1"/>
</dbReference>
<dbReference type="Gene3D" id="6.20.10.30">
    <property type="match status" value="1"/>
</dbReference>
<dbReference type="Gene3D" id="1.10.150.20">
    <property type="entry name" value="5' to 3' exonuclease, C-terminal subdomain"/>
    <property type="match status" value="2"/>
</dbReference>
<dbReference type="Gene3D" id="3.40.50.10190">
    <property type="entry name" value="BRCT domain"/>
    <property type="match status" value="1"/>
</dbReference>
<dbReference type="Gene3D" id="3.30.470.30">
    <property type="entry name" value="DNA ligase/mRNA capping enzyme"/>
    <property type="match status" value="1"/>
</dbReference>
<dbReference type="Gene3D" id="1.10.287.610">
    <property type="entry name" value="Helix hairpin bin"/>
    <property type="match status" value="1"/>
</dbReference>
<dbReference type="Gene3D" id="2.40.50.140">
    <property type="entry name" value="Nucleic acid-binding proteins"/>
    <property type="match status" value="1"/>
</dbReference>
<dbReference type="HAMAP" id="MF_01588">
    <property type="entry name" value="DNA_ligase_A"/>
    <property type="match status" value="1"/>
</dbReference>
<dbReference type="InterPro" id="IPR001357">
    <property type="entry name" value="BRCT_dom"/>
</dbReference>
<dbReference type="InterPro" id="IPR036420">
    <property type="entry name" value="BRCT_dom_sf"/>
</dbReference>
<dbReference type="InterPro" id="IPR041663">
    <property type="entry name" value="DisA/LigA_HHH"/>
</dbReference>
<dbReference type="InterPro" id="IPR001679">
    <property type="entry name" value="DNA_ligase"/>
</dbReference>
<dbReference type="InterPro" id="IPR018239">
    <property type="entry name" value="DNA_ligase_AS"/>
</dbReference>
<dbReference type="InterPro" id="IPR033136">
    <property type="entry name" value="DNA_ligase_CS"/>
</dbReference>
<dbReference type="InterPro" id="IPR013839">
    <property type="entry name" value="DNAligase_adenylation"/>
</dbReference>
<dbReference type="InterPro" id="IPR013840">
    <property type="entry name" value="DNAligase_N"/>
</dbReference>
<dbReference type="InterPro" id="IPR003583">
    <property type="entry name" value="Hlx-hairpin-Hlx_DNA-bd_motif"/>
</dbReference>
<dbReference type="InterPro" id="IPR012340">
    <property type="entry name" value="NA-bd_OB-fold"/>
</dbReference>
<dbReference type="InterPro" id="IPR004150">
    <property type="entry name" value="NAD_DNA_ligase_OB"/>
</dbReference>
<dbReference type="InterPro" id="IPR010994">
    <property type="entry name" value="RuvA_2-like"/>
</dbReference>
<dbReference type="InterPro" id="IPR004149">
    <property type="entry name" value="Znf_DNAligase_C4"/>
</dbReference>
<dbReference type="NCBIfam" id="TIGR00575">
    <property type="entry name" value="dnlj"/>
    <property type="match status" value="1"/>
</dbReference>
<dbReference type="NCBIfam" id="NF005932">
    <property type="entry name" value="PRK07956.1"/>
    <property type="match status" value="1"/>
</dbReference>
<dbReference type="PANTHER" id="PTHR23389">
    <property type="entry name" value="CHROMOSOME TRANSMISSION FIDELITY FACTOR 18"/>
    <property type="match status" value="1"/>
</dbReference>
<dbReference type="PANTHER" id="PTHR23389:SF9">
    <property type="entry name" value="DNA LIGASE"/>
    <property type="match status" value="1"/>
</dbReference>
<dbReference type="Pfam" id="PF00533">
    <property type="entry name" value="BRCT"/>
    <property type="match status" value="1"/>
</dbReference>
<dbReference type="Pfam" id="PF01653">
    <property type="entry name" value="DNA_ligase_aden"/>
    <property type="match status" value="1"/>
</dbReference>
<dbReference type="Pfam" id="PF03120">
    <property type="entry name" value="DNA_ligase_OB"/>
    <property type="match status" value="1"/>
</dbReference>
<dbReference type="Pfam" id="PF03119">
    <property type="entry name" value="DNA_ligase_ZBD"/>
    <property type="match status" value="1"/>
</dbReference>
<dbReference type="Pfam" id="PF12826">
    <property type="entry name" value="HHH_2"/>
    <property type="match status" value="1"/>
</dbReference>
<dbReference type="PIRSF" id="PIRSF001604">
    <property type="entry name" value="LigA"/>
    <property type="match status" value="1"/>
</dbReference>
<dbReference type="SMART" id="SM00292">
    <property type="entry name" value="BRCT"/>
    <property type="match status" value="1"/>
</dbReference>
<dbReference type="SMART" id="SM00278">
    <property type="entry name" value="HhH1"/>
    <property type="match status" value="3"/>
</dbReference>
<dbReference type="SMART" id="SM00532">
    <property type="entry name" value="LIGANc"/>
    <property type="match status" value="1"/>
</dbReference>
<dbReference type="SUPFAM" id="SSF52113">
    <property type="entry name" value="BRCT domain"/>
    <property type="match status" value="1"/>
</dbReference>
<dbReference type="SUPFAM" id="SSF56091">
    <property type="entry name" value="DNA ligase/mRNA capping enzyme, catalytic domain"/>
    <property type="match status" value="1"/>
</dbReference>
<dbReference type="SUPFAM" id="SSF50249">
    <property type="entry name" value="Nucleic acid-binding proteins"/>
    <property type="match status" value="1"/>
</dbReference>
<dbReference type="SUPFAM" id="SSF47781">
    <property type="entry name" value="RuvA domain 2-like"/>
    <property type="match status" value="1"/>
</dbReference>
<dbReference type="PROSITE" id="PS50172">
    <property type="entry name" value="BRCT"/>
    <property type="match status" value="1"/>
</dbReference>
<dbReference type="PROSITE" id="PS01055">
    <property type="entry name" value="DNA_LIGASE_N1"/>
    <property type="match status" value="1"/>
</dbReference>
<dbReference type="PROSITE" id="PS01056">
    <property type="entry name" value="DNA_LIGASE_N2"/>
    <property type="match status" value="1"/>
</dbReference>
<keyword id="KW-0227">DNA damage</keyword>
<keyword id="KW-0234">DNA repair</keyword>
<keyword id="KW-0235">DNA replication</keyword>
<keyword id="KW-0436">Ligase</keyword>
<keyword id="KW-0460">Magnesium</keyword>
<keyword id="KW-0464">Manganese</keyword>
<keyword id="KW-0479">Metal-binding</keyword>
<keyword id="KW-0520">NAD</keyword>
<keyword id="KW-0862">Zinc</keyword>
<name>DNLJ_SHEPC</name>
<organism>
    <name type="scientific">Shewanella putrefaciens (strain CN-32 / ATCC BAA-453)</name>
    <dbReference type="NCBI Taxonomy" id="319224"/>
    <lineage>
        <taxon>Bacteria</taxon>
        <taxon>Pseudomonadati</taxon>
        <taxon>Pseudomonadota</taxon>
        <taxon>Gammaproteobacteria</taxon>
        <taxon>Alteromonadales</taxon>
        <taxon>Shewanellaceae</taxon>
        <taxon>Shewanella</taxon>
    </lineage>
</organism>